<organism>
    <name type="scientific">Methanococcus vannielii (strain ATCC 35089 / DSM 1224 / JCM 13029 / OCM 148 / SB)</name>
    <dbReference type="NCBI Taxonomy" id="406327"/>
    <lineage>
        <taxon>Archaea</taxon>
        <taxon>Methanobacteriati</taxon>
        <taxon>Methanobacteriota</taxon>
        <taxon>Methanomada group</taxon>
        <taxon>Methanococci</taxon>
        <taxon>Methanococcales</taxon>
        <taxon>Methanococcaceae</taxon>
        <taxon>Methanococcus</taxon>
    </lineage>
</organism>
<name>RS4E_METVS</name>
<keyword id="KW-0687">Ribonucleoprotein</keyword>
<keyword id="KW-0689">Ribosomal protein</keyword>
<keyword id="KW-0694">RNA-binding</keyword>
<keyword id="KW-0699">rRNA-binding</keyword>
<gene>
    <name evidence="1" type="primary">rps4e</name>
    <name type="ordered locus">Mevan_0722</name>
</gene>
<reference key="1">
    <citation type="submission" date="2007-06" db="EMBL/GenBank/DDBJ databases">
        <title>Complete sequence of Methanococcus vannielii SB.</title>
        <authorList>
            <consortium name="US DOE Joint Genome Institute"/>
            <person name="Copeland A."/>
            <person name="Lucas S."/>
            <person name="Lapidus A."/>
            <person name="Barry K."/>
            <person name="Glavina del Rio T."/>
            <person name="Dalin E."/>
            <person name="Tice H."/>
            <person name="Pitluck S."/>
            <person name="Chain P."/>
            <person name="Malfatti S."/>
            <person name="Shin M."/>
            <person name="Vergez L."/>
            <person name="Schmutz J."/>
            <person name="Larimer F."/>
            <person name="Land M."/>
            <person name="Hauser L."/>
            <person name="Kyrpides N."/>
            <person name="Anderson I."/>
            <person name="Sieprawska-Lupa M."/>
            <person name="Whitman W.B."/>
            <person name="Richardson P."/>
        </authorList>
    </citation>
    <scope>NUCLEOTIDE SEQUENCE [LARGE SCALE GENOMIC DNA]</scope>
    <source>
        <strain>ATCC 35089 / DSM 1224 / JCM 13029 / OCM 148 / SB</strain>
    </source>
</reference>
<comment type="similarity">
    <text evidence="1">Belongs to the eukaryotic ribosomal protein eS4 family.</text>
</comment>
<evidence type="ECO:0000255" key="1">
    <source>
        <dbReference type="HAMAP-Rule" id="MF_00485"/>
    </source>
</evidence>
<evidence type="ECO:0000305" key="2"/>
<proteinExistence type="inferred from homology"/>
<protein>
    <recommendedName>
        <fullName evidence="1">Small ribosomal subunit protein eS4</fullName>
    </recommendedName>
    <alternativeName>
        <fullName evidence="2">30S ribosomal protein S4e</fullName>
    </alternativeName>
</protein>
<accession>A6UQ56</accession>
<dbReference type="EMBL" id="CP000742">
    <property type="protein sequence ID" value="ABR54628.1"/>
    <property type="molecule type" value="Genomic_DNA"/>
</dbReference>
<dbReference type="RefSeq" id="WP_011972530.1">
    <property type="nucleotide sequence ID" value="NC_009634.1"/>
</dbReference>
<dbReference type="SMR" id="A6UQ56"/>
<dbReference type="STRING" id="406327.Mevan_0722"/>
<dbReference type="GeneID" id="5326103"/>
<dbReference type="KEGG" id="mvn:Mevan_0722"/>
<dbReference type="eggNOG" id="arCOG04093">
    <property type="taxonomic scope" value="Archaea"/>
</dbReference>
<dbReference type="HOGENOM" id="CLU_060400_0_0_2"/>
<dbReference type="OrthoDB" id="372073at2157"/>
<dbReference type="Proteomes" id="UP000001107">
    <property type="component" value="Chromosome"/>
</dbReference>
<dbReference type="GO" id="GO:0022627">
    <property type="term" value="C:cytosolic small ribosomal subunit"/>
    <property type="evidence" value="ECO:0007669"/>
    <property type="project" value="TreeGrafter"/>
</dbReference>
<dbReference type="GO" id="GO:0019843">
    <property type="term" value="F:rRNA binding"/>
    <property type="evidence" value="ECO:0007669"/>
    <property type="project" value="UniProtKB-KW"/>
</dbReference>
<dbReference type="GO" id="GO:0003735">
    <property type="term" value="F:structural constituent of ribosome"/>
    <property type="evidence" value="ECO:0007669"/>
    <property type="project" value="InterPro"/>
</dbReference>
<dbReference type="GO" id="GO:0006412">
    <property type="term" value="P:translation"/>
    <property type="evidence" value="ECO:0007669"/>
    <property type="project" value="UniProtKB-UniRule"/>
</dbReference>
<dbReference type="CDD" id="cd06087">
    <property type="entry name" value="KOW_RPS4"/>
    <property type="match status" value="1"/>
</dbReference>
<dbReference type="CDD" id="cd00165">
    <property type="entry name" value="S4"/>
    <property type="match status" value="1"/>
</dbReference>
<dbReference type="FunFam" id="3.10.290.10:FF:000002">
    <property type="entry name" value="40S ribosomal protein S4"/>
    <property type="match status" value="1"/>
</dbReference>
<dbReference type="Gene3D" id="2.30.30.30">
    <property type="match status" value="1"/>
</dbReference>
<dbReference type="Gene3D" id="2.40.50.740">
    <property type="match status" value="1"/>
</dbReference>
<dbReference type="Gene3D" id="3.10.290.10">
    <property type="entry name" value="RNA-binding S4 domain"/>
    <property type="match status" value="1"/>
</dbReference>
<dbReference type="HAMAP" id="MF_00485">
    <property type="entry name" value="Ribosomal_eS4"/>
    <property type="match status" value="1"/>
</dbReference>
<dbReference type="InterPro" id="IPR005824">
    <property type="entry name" value="KOW"/>
</dbReference>
<dbReference type="InterPro" id="IPR014722">
    <property type="entry name" value="Rib_uL2_dom2"/>
</dbReference>
<dbReference type="InterPro" id="IPR000876">
    <property type="entry name" value="Ribosomal_eS4"/>
</dbReference>
<dbReference type="InterPro" id="IPR013845">
    <property type="entry name" value="Ribosomal_eS4_central_region"/>
</dbReference>
<dbReference type="InterPro" id="IPR038237">
    <property type="entry name" value="Ribosomal_eS4_central_sf"/>
</dbReference>
<dbReference type="InterPro" id="IPR041982">
    <property type="entry name" value="Ribosomal_eS4_KOW"/>
</dbReference>
<dbReference type="InterPro" id="IPR013843">
    <property type="entry name" value="Ribosomal_eS4_N"/>
</dbReference>
<dbReference type="InterPro" id="IPR018199">
    <property type="entry name" value="Ribosomal_eS4_N_CS"/>
</dbReference>
<dbReference type="InterPro" id="IPR002942">
    <property type="entry name" value="S4_RNA-bd"/>
</dbReference>
<dbReference type="InterPro" id="IPR036986">
    <property type="entry name" value="S4_RNA-bd_sf"/>
</dbReference>
<dbReference type="NCBIfam" id="NF003312">
    <property type="entry name" value="PRK04313.1"/>
    <property type="match status" value="1"/>
</dbReference>
<dbReference type="PANTHER" id="PTHR11581">
    <property type="entry name" value="30S/40S RIBOSOMAL PROTEIN S4"/>
    <property type="match status" value="1"/>
</dbReference>
<dbReference type="PANTHER" id="PTHR11581:SF0">
    <property type="entry name" value="SMALL RIBOSOMAL SUBUNIT PROTEIN ES4"/>
    <property type="match status" value="1"/>
</dbReference>
<dbReference type="Pfam" id="PF00467">
    <property type="entry name" value="KOW"/>
    <property type="match status" value="1"/>
</dbReference>
<dbReference type="Pfam" id="PF00900">
    <property type="entry name" value="Ribosomal_S4e"/>
    <property type="match status" value="1"/>
</dbReference>
<dbReference type="Pfam" id="PF08071">
    <property type="entry name" value="RS4NT"/>
    <property type="match status" value="1"/>
</dbReference>
<dbReference type="Pfam" id="PF01479">
    <property type="entry name" value="S4"/>
    <property type="match status" value="1"/>
</dbReference>
<dbReference type="PIRSF" id="PIRSF002116">
    <property type="entry name" value="Ribosomal_S4"/>
    <property type="match status" value="1"/>
</dbReference>
<dbReference type="PROSITE" id="PS00528">
    <property type="entry name" value="RIBOSOMAL_S4E"/>
    <property type="match status" value="1"/>
</dbReference>
<dbReference type="PROSITE" id="PS50889">
    <property type="entry name" value="S4"/>
    <property type="match status" value="1"/>
</dbReference>
<feature type="chain" id="PRO_1000081344" description="Small ribosomal subunit protein eS4">
    <location>
        <begin position="1"/>
        <end position="244"/>
    </location>
</feature>
<feature type="domain" description="S4 RNA-binding" evidence="1">
    <location>
        <begin position="43"/>
        <end position="106"/>
    </location>
</feature>
<sequence length="244" mass="27325">MAIKGPRKHLKRLAAPANWQLPRKERTFTVRPSPGPHSMDKSLPLLLIVRDTLKCADNAREAKKIIQMGKILIDGVKRKEYKHPVGLMDVLSIPELNENYLVLFDENGRISLKKTEKTGVKLCKIVNKTVIKGGHIQLNLHDGRNQIVKVANALKAEEDIYKTGDSVLVSLPEQAVVGHVEFNEGKLAYITGGKHVGEFAKVVEVEKRTLYSDIVTLENKDGEKFKTIKPYVFIVGQDEPVISM</sequence>